<dbReference type="EMBL" id="M19056">
    <property type="protein sequence ID" value="AAA43211.1"/>
    <property type="molecule type" value="Genomic_RNA"/>
</dbReference>
<dbReference type="PDB" id="2DCI">
    <property type="method" value="NMR"/>
    <property type="chains" value="A=330-349"/>
</dbReference>
<dbReference type="PDB" id="2JRD">
    <property type="method" value="NMR"/>
    <property type="chains" value="A=330-349"/>
</dbReference>
<dbReference type="PDBsum" id="2DCI"/>
<dbReference type="PDBsum" id="2JRD"/>
<dbReference type="SMR" id="P11134"/>
<dbReference type="GlyCosmos" id="P11134">
    <property type="glycosylation" value="6 sites, No reported glycans"/>
</dbReference>
<dbReference type="EvolutionaryTrace" id="P11134"/>
<dbReference type="GO" id="GO:0020002">
    <property type="term" value="C:host cell plasma membrane"/>
    <property type="evidence" value="ECO:0007669"/>
    <property type="project" value="UniProtKB-SubCell"/>
</dbReference>
<dbReference type="GO" id="GO:0016020">
    <property type="term" value="C:membrane"/>
    <property type="evidence" value="ECO:0007669"/>
    <property type="project" value="UniProtKB-KW"/>
</dbReference>
<dbReference type="GO" id="GO:0019031">
    <property type="term" value="C:viral envelope"/>
    <property type="evidence" value="ECO:0007669"/>
    <property type="project" value="UniProtKB-KW"/>
</dbReference>
<dbReference type="GO" id="GO:0055036">
    <property type="term" value="C:virion membrane"/>
    <property type="evidence" value="ECO:0007669"/>
    <property type="project" value="UniProtKB-SubCell"/>
</dbReference>
<dbReference type="GO" id="GO:0046789">
    <property type="term" value="F:host cell surface receptor binding"/>
    <property type="evidence" value="ECO:0007669"/>
    <property type="project" value="InterPro"/>
</dbReference>
<dbReference type="GO" id="GO:0075512">
    <property type="term" value="P:clathrin-dependent endocytosis of virus by host cell"/>
    <property type="evidence" value="ECO:0007669"/>
    <property type="project" value="UniProtKB-KW"/>
</dbReference>
<dbReference type="GO" id="GO:0039654">
    <property type="term" value="P:fusion of virus membrane with host endosome membrane"/>
    <property type="evidence" value="ECO:0007669"/>
    <property type="project" value="UniProtKB-KW"/>
</dbReference>
<dbReference type="GO" id="GO:0019064">
    <property type="term" value="P:fusion of virus membrane with host plasma membrane"/>
    <property type="evidence" value="ECO:0007669"/>
    <property type="project" value="InterPro"/>
</dbReference>
<dbReference type="GO" id="GO:0019062">
    <property type="term" value="P:virion attachment to host cell"/>
    <property type="evidence" value="ECO:0007669"/>
    <property type="project" value="UniProtKB-KW"/>
</dbReference>
<dbReference type="FunFam" id="3.90.20.10:FF:000001">
    <property type="entry name" value="Hemagglutinin"/>
    <property type="match status" value="1"/>
</dbReference>
<dbReference type="FunFam" id="3.90.209.20:FF:000001">
    <property type="entry name" value="Hemagglutinin"/>
    <property type="match status" value="1"/>
</dbReference>
<dbReference type="Gene3D" id="3.90.20.10">
    <property type="match status" value="1"/>
</dbReference>
<dbReference type="Gene3D" id="3.90.209.20">
    <property type="match status" value="1"/>
</dbReference>
<dbReference type="HAMAP" id="MF_04072">
    <property type="entry name" value="INFV_HEMA"/>
    <property type="match status" value="1"/>
</dbReference>
<dbReference type="InterPro" id="IPR008980">
    <property type="entry name" value="Capsid_hemagglutn"/>
</dbReference>
<dbReference type="InterPro" id="IPR013828">
    <property type="entry name" value="Hemagglutn_HA1_a/b_dom_sf"/>
</dbReference>
<dbReference type="InterPro" id="IPR000149">
    <property type="entry name" value="Hemagglutn_influenz_A"/>
</dbReference>
<dbReference type="InterPro" id="IPR001364">
    <property type="entry name" value="Hemagglutn_influenz_A/B"/>
</dbReference>
<dbReference type="Pfam" id="PF00509">
    <property type="entry name" value="Hemagglutinin"/>
    <property type="match status" value="1"/>
</dbReference>
<dbReference type="PRINTS" id="PR00330">
    <property type="entry name" value="HEMAGGLUTN1"/>
</dbReference>
<dbReference type="PRINTS" id="PR00329">
    <property type="entry name" value="HEMAGGLUTN12"/>
</dbReference>
<dbReference type="SUPFAM" id="SSF58064">
    <property type="entry name" value="Influenza hemagglutinin (stalk)"/>
    <property type="match status" value="1"/>
</dbReference>
<dbReference type="SUPFAM" id="SSF49818">
    <property type="entry name" value="Viral protein domain"/>
    <property type="match status" value="1"/>
</dbReference>
<gene>
    <name evidence="1" type="primary">HA</name>
</gene>
<proteinExistence type="evidence at protein level"/>
<organismHost>
    <name type="scientific">Aves</name>
    <dbReference type="NCBI Taxonomy" id="8782"/>
</organismHost>
<organismHost>
    <name type="scientific">Cetacea</name>
    <name type="common">whales</name>
    <dbReference type="NCBI Taxonomy" id="9721"/>
</organismHost>
<organismHost>
    <name type="scientific">Homo sapiens</name>
    <name type="common">Human</name>
    <dbReference type="NCBI Taxonomy" id="9606"/>
</organismHost>
<organismHost>
    <name type="scientific">Phocidae</name>
    <name type="common">true seals</name>
    <dbReference type="NCBI Taxonomy" id="9709"/>
</organismHost>
<organismHost>
    <name type="scientific">Sus scrofa</name>
    <name type="common">Pig</name>
    <dbReference type="NCBI Taxonomy" id="9823"/>
</organismHost>
<sequence length="550" mass="61580">QDLPGNDNSTATLCLGHHAVPNGTIVKTITDDQIEVTNATELVQSSSTGKICNNPHKILDGRDCTLIDALLGDPHCDVFQDETWDLFVERSNAFSSCYPYDVPDYASLRSLVASSGTLEFITEGFTWTGVTQNGGSSACKRGPASGFFSRLNWLTKSGSTYPVLNVTMPNNDNFDKLYIWGVHHPSTNQEQTNLYVQASGRVTVSTRRSQQTIIPNIGSRPWVRGQSGRISIYWTIVKPGDVLVINSNGNLIAPRGYFKMRTGKSSIMRSDAPIDTCVSECITPNGSIPNDKPFQNVNKITYGACPKYVKQNSLKLATGMRNVPEKQTRGLFGAIAGFIENGWEGMIDGWYGFRHQNSEGTGQAADLKSTQAAIDQINGKLNRVIEKTNEKFHQIEKEFSEVEGRIQDLEKYVEDTKIDLWSYNADVLVALENQHTIDLTDSEMNKLFEKTRRQLRENAEDMGNGCFKIYHKCDNACIESIRNGTYDHDIYRDEALNNRFQIKGVELKSGYKDWILWISFAISCFLLCVVLLGFIMWACQRGNIRCNICI</sequence>
<feature type="chain" id="PRO_0000440846" description="Hemagglutinin HA1 chain" evidence="1">
    <location>
        <begin position="1"/>
        <end position="329"/>
    </location>
</feature>
<feature type="chain" id="PRO_0000039078" description="Hemagglutinin HA2 chain" evidence="1">
    <location>
        <begin position="330"/>
        <end position="550"/>
    </location>
</feature>
<feature type="topological domain" description="Extracellular" evidence="1">
    <location>
        <begin position="1"/>
        <end position="514"/>
    </location>
</feature>
<feature type="transmembrane region" description="Helical" evidence="1">
    <location>
        <begin position="515"/>
        <end position="535"/>
    </location>
</feature>
<feature type="topological domain" description="Cytoplasmic" evidence="1">
    <location>
        <begin position="536"/>
        <end position="550"/>
    </location>
</feature>
<feature type="site" description="Cleavage; by host" evidence="1">
    <location>
        <begin position="329"/>
        <end position="330"/>
    </location>
</feature>
<feature type="lipid moiety-binding region" description="S-palmitoyl cysteine; by host" evidence="1">
    <location>
        <position position="539"/>
    </location>
</feature>
<feature type="lipid moiety-binding region" description="S-palmitoyl cysteine; by host" evidence="1">
    <location>
        <position position="546"/>
    </location>
</feature>
<feature type="lipid moiety-binding region" description="S-palmitoyl cysteine; by host" evidence="1">
    <location>
        <position position="549"/>
    </location>
</feature>
<feature type="glycosylation site" description="N-linked (GlcNAc...) asparagine; by host" evidence="1">
    <location>
        <position position="8"/>
    </location>
</feature>
<feature type="glycosylation site" description="N-linked (GlcNAc...) asparagine; by host" evidence="1">
    <location>
        <position position="22"/>
    </location>
</feature>
<feature type="glycosylation site" description="N-linked (GlcNAc...) asparagine; by host" evidence="1">
    <location>
        <position position="38"/>
    </location>
</feature>
<feature type="glycosylation site" description="N-linked (GlcNAc...) asparagine; by host" evidence="1">
    <location>
        <position position="165"/>
    </location>
</feature>
<feature type="glycosylation site" description="N-linked (GlcNAc...) asparagine; by host" evidence="1">
    <location>
        <position position="285"/>
    </location>
</feature>
<feature type="glycosylation site" description="N-linked (GlcNAc...) asparagine; by host" evidence="1">
    <location>
        <position position="483"/>
    </location>
</feature>
<feature type="disulfide bond" description="Interchain (between HA1 and HA2 chains)" evidence="1">
    <location>
        <begin position="14"/>
        <end position="466"/>
    </location>
</feature>
<feature type="disulfide bond" evidence="1">
    <location>
        <begin position="52"/>
        <end position="277"/>
    </location>
</feature>
<feature type="disulfide bond" evidence="1">
    <location>
        <begin position="64"/>
        <end position="76"/>
    </location>
</feature>
<feature type="disulfide bond" evidence="1">
    <location>
        <begin position="97"/>
        <end position="139"/>
    </location>
</feature>
<feature type="disulfide bond" evidence="1">
    <location>
        <begin position="281"/>
        <end position="305"/>
    </location>
</feature>
<feature type="disulfide bond" evidence="1">
    <location>
        <begin position="473"/>
        <end position="477"/>
    </location>
</feature>
<feature type="non-terminal residue">
    <location>
        <position position="1"/>
    </location>
</feature>
<feature type="helix" evidence="2">
    <location>
        <begin position="331"/>
        <end position="334"/>
    </location>
</feature>
<feature type="helix" evidence="2">
    <location>
        <begin position="336"/>
        <end position="338"/>
    </location>
</feature>
<feature type="turn" evidence="2">
    <location>
        <begin position="339"/>
        <end position="341"/>
    </location>
</feature>
<feature type="turn" evidence="2">
    <location>
        <begin position="344"/>
        <end position="348"/>
    </location>
</feature>
<accession>P11134</accession>
<accession>Q84025</accession>
<accession>Q84026</accession>
<evidence type="ECO:0000255" key="1">
    <source>
        <dbReference type="HAMAP-Rule" id="MF_04072"/>
    </source>
</evidence>
<evidence type="ECO:0007829" key="2">
    <source>
        <dbReference type="PDB" id="2DCI"/>
    </source>
</evidence>
<comment type="function">
    <text evidence="1">Binds to sialic acid-containing receptors on the cell surface, bringing about the attachment of the virus particle to the cell. This attachment induces virion internalization either through clathrin-dependent endocytosis or through clathrin- and caveolin-independent pathway. Plays a major role in the determination of host range restriction and virulence. Class I viral fusion protein. Responsible for penetration of the virus into the cell cytoplasm by mediating the fusion of the membrane of the endocytosed virus particle with the endosomal membrane. Low pH in endosomes induces an irreversible conformational change in HA2, releasing the fusion hydrophobic peptide. Several trimers are required to form a competent fusion pore.</text>
</comment>
<comment type="subunit">
    <text evidence="1">Homotrimer of disulfide-linked HA1-HA2.</text>
</comment>
<comment type="subcellular location">
    <subcellularLocation>
        <location evidence="1">Virion membrane</location>
        <topology evidence="1">Single-pass type I membrane protein</topology>
    </subcellularLocation>
    <subcellularLocation>
        <location evidence="1">Host apical cell membrane</location>
        <topology evidence="1">Single-pass type I membrane protein</topology>
    </subcellularLocation>
    <text evidence="1">Targeted to the apical plasma membrane in epithelial polarized cells through a signal present in the transmembrane domain. Associated with glycosphingolipid- and cholesterol-enriched detergent-resistant lipid rafts.</text>
</comment>
<comment type="PTM">
    <text evidence="1">Palmitoylated.</text>
</comment>
<comment type="PTM">
    <text evidence="1">In natural infection, inactive HA is matured into HA1 and HA2 outside the cell by one or more trypsin-like, arginine-specific endoprotease secreted by the bronchial epithelial cells. One identified protease that may be involved in this process is secreted in lungs by club cells.</text>
</comment>
<comment type="miscellaneous">
    <text>Major glycoprotein, comprises over 80% of the envelope proteins present in virus particle.</text>
</comment>
<comment type="miscellaneous">
    <text>The extent of infection into host organism is determined by HA. Influenza viruses bud from the apical surface of polarized epithelial cells (e.g. bronchial epithelial cells) into lumen of lungs and are therefore usually pneumotropic. The reason is that HA is cleaved by tryptase clara which is restricted to lungs. However, HAs of H5 and H7 pantropic avian viruses subtypes can be cleaved by furin and subtilisin-type enzymes, allowing the virus to grow in other organs than lungs.</text>
</comment>
<comment type="miscellaneous">
    <text>The influenza A genome consist of 8 RNA segments. Genetic variation of hemagglutinin and/or neuraminidase genes results in the emergence of new influenza strains. The mechanism of variation can be the result of point mutations or the result of genetic reassortment between segments of two different strains.</text>
</comment>
<comment type="similarity">
    <text evidence="1">Belongs to the influenza viruses hemagglutinin family.</text>
</comment>
<organism>
    <name type="scientific">Influenza A virus (strain A/Swine/Hong Kong/126/1982 H3N2)</name>
    <dbReference type="NCBI Taxonomy" id="382848"/>
    <lineage>
        <taxon>Viruses</taxon>
        <taxon>Riboviria</taxon>
        <taxon>Orthornavirae</taxon>
        <taxon>Negarnaviricota</taxon>
        <taxon>Polyploviricotina</taxon>
        <taxon>Insthoviricetes</taxon>
        <taxon>Articulavirales</taxon>
        <taxon>Orthomyxoviridae</taxon>
        <taxon>Alphainfluenzavirus</taxon>
        <taxon>Alphainfluenzavirus influenzae</taxon>
        <taxon>Influenza A virus</taxon>
    </lineage>
</organism>
<protein>
    <recommendedName>
        <fullName evidence="1">Hemagglutinin</fullName>
    </recommendedName>
    <component>
        <recommendedName>
            <fullName evidence="1">Hemagglutinin HA1 chain</fullName>
        </recommendedName>
    </component>
    <component>
        <recommendedName>
            <fullName evidence="1">Hemagglutinin HA2 chain</fullName>
        </recommendedName>
    </component>
</protein>
<reference key="1">
    <citation type="journal article" date="1988" name="Virology">
        <title>Origin of the hemagglutinin gene of H3N2 influenza viruses from pigs in China.</title>
        <authorList>
            <person name="Kida H."/>
            <person name="Shortridge K.F."/>
            <person name="Webster R.G."/>
        </authorList>
    </citation>
    <scope>NUCLEOTIDE SEQUENCE [GENOMIC RNA] OF 1-548</scope>
</reference>
<keyword id="KW-0002">3D-structure</keyword>
<keyword id="KW-1167">Clathrin- and caveolin-independent endocytosis of virus by host</keyword>
<keyword id="KW-1165">Clathrin-mediated endocytosis of virus by host</keyword>
<keyword id="KW-1015">Disulfide bond</keyword>
<keyword id="KW-1170">Fusion of virus membrane with host endosomal membrane</keyword>
<keyword id="KW-1168">Fusion of virus membrane with host membrane</keyword>
<keyword id="KW-0325">Glycoprotein</keyword>
<keyword id="KW-0348">Hemagglutinin</keyword>
<keyword id="KW-1032">Host cell membrane</keyword>
<keyword id="KW-1043">Host membrane</keyword>
<keyword id="KW-0945">Host-virus interaction</keyword>
<keyword id="KW-0449">Lipoprotein</keyword>
<keyword id="KW-0472">Membrane</keyword>
<keyword id="KW-0564">Palmitate</keyword>
<keyword id="KW-0812">Transmembrane</keyword>
<keyword id="KW-1133">Transmembrane helix</keyword>
<keyword id="KW-1161">Viral attachment to host cell</keyword>
<keyword id="KW-0261">Viral envelope protein</keyword>
<keyword id="KW-1162">Viral penetration into host cytoplasm</keyword>
<keyword id="KW-0946">Virion</keyword>
<keyword id="KW-1164">Virus endocytosis by host</keyword>
<keyword id="KW-1160">Virus entry into host cell</keyword>
<name>HEMA_I82A4</name>